<gene>
    <name type="ordered locus">NE0724</name>
</gene>
<dbReference type="EMBL" id="AL954747">
    <property type="protein sequence ID" value="CAD84635.1"/>
    <property type="molecule type" value="Genomic_DNA"/>
</dbReference>
<dbReference type="STRING" id="228410.NE0724"/>
<dbReference type="KEGG" id="neu:NE0724"/>
<dbReference type="eggNOG" id="COG2855">
    <property type="taxonomic scope" value="Bacteria"/>
</dbReference>
<dbReference type="HOGENOM" id="CLU_033541_6_0_4"/>
<dbReference type="OrthoDB" id="9766798at2"/>
<dbReference type="PhylomeDB" id="Q82WF6"/>
<dbReference type="Proteomes" id="UP000001416">
    <property type="component" value="Chromosome"/>
</dbReference>
<dbReference type="GO" id="GO:0005886">
    <property type="term" value="C:plasma membrane"/>
    <property type="evidence" value="ECO:0007669"/>
    <property type="project" value="UniProtKB-SubCell"/>
</dbReference>
<dbReference type="InterPro" id="IPR018383">
    <property type="entry name" value="UPF0324_pro"/>
</dbReference>
<dbReference type="PANTHER" id="PTHR30106">
    <property type="entry name" value="INNER MEMBRANE PROTEIN YEIH-RELATED"/>
    <property type="match status" value="1"/>
</dbReference>
<dbReference type="PANTHER" id="PTHR30106:SF1">
    <property type="entry name" value="UPF0324 MEMBRANE PROTEIN FN0533"/>
    <property type="match status" value="1"/>
</dbReference>
<dbReference type="Pfam" id="PF03601">
    <property type="entry name" value="Cons_hypoth698"/>
    <property type="match status" value="1"/>
</dbReference>
<reference key="1">
    <citation type="journal article" date="2003" name="J. Bacteriol.">
        <title>Complete genome sequence of the ammonia-oxidizing bacterium and obligate chemolithoautotroph Nitrosomonas europaea.</title>
        <authorList>
            <person name="Chain P."/>
            <person name="Lamerdin J.E."/>
            <person name="Larimer F.W."/>
            <person name="Regala W."/>
            <person name="Lao V."/>
            <person name="Land M.L."/>
            <person name="Hauser L."/>
            <person name="Hooper A.B."/>
            <person name="Klotz M.G."/>
            <person name="Norton J."/>
            <person name="Sayavedra-Soto L.A."/>
            <person name="Arciero D.M."/>
            <person name="Hommes N.G."/>
            <person name="Whittaker M.M."/>
            <person name="Arp D.J."/>
        </authorList>
    </citation>
    <scope>NUCLEOTIDE SEQUENCE [LARGE SCALE GENOMIC DNA]</scope>
    <source>
        <strain>ATCC 19718 / CIP 103999 / KCTC 2705 / NBRC 14298</strain>
    </source>
</reference>
<sequence length="487" mass="53923">MNAMNDKWYSGMARTEDWWAVWLGLIMFMASVSSLWGWELTGWMAKPDTWVWEKFSIEGVLKSSGKPEWHPALSLLVTYLVFTALTCLAAWSMKFDLKQFFIGWTILFIMTWVIWIIGNEAHFKASVYEMDKYGLSWGLSLGSGFSYLLALLVGLVIGNFFKNTARFLNEAAKPEWFIKTAIVFLGIKIGVMSIEAAGFITELVMTGVAATFVAYMLFWPIVYALGRRVFHLSRDAAAVLSSGISICGISAAIATAGAIRARPALPAFVSILVVIFAMFELIILPGFYTAIAPEQPIVNGSALGLTVKTDGADAAAGAMLDELMRANAEANLGIVWKEGWILMASLTTKIWIDMFIGVWAFVLALVWVYKVERKPGQSKIGLMEIWHRFPKFVLGYLLVWFSYIMLASSGSEAAETLHKAAAAVEGPMRNMMFMLTFISIGIITDFSKLKGMGKLALLYAIALFGIIAPIAYGVAWIFHRGMMPPVL</sequence>
<evidence type="ECO:0000255" key="1"/>
<evidence type="ECO:0000305" key="2"/>
<name>Y724_NITEU</name>
<feature type="chain" id="PRO_0000157431" description="UPF0324 membrane protein NE0724">
    <location>
        <begin position="1"/>
        <end position="487"/>
    </location>
</feature>
<feature type="transmembrane region" description="Helical" evidence="1">
    <location>
        <begin position="19"/>
        <end position="38"/>
    </location>
</feature>
<feature type="transmembrane region" description="Helical" evidence="1">
    <location>
        <begin position="71"/>
        <end position="93"/>
    </location>
</feature>
<feature type="transmembrane region" description="Helical" evidence="1">
    <location>
        <begin position="100"/>
        <end position="119"/>
    </location>
</feature>
<feature type="transmembrane region" description="Helical" evidence="1">
    <location>
        <begin position="139"/>
        <end position="161"/>
    </location>
</feature>
<feature type="transmembrane region" description="Helical" evidence="1">
    <location>
        <begin position="181"/>
        <end position="200"/>
    </location>
</feature>
<feature type="transmembrane region" description="Helical" evidence="1">
    <location>
        <begin position="204"/>
        <end position="226"/>
    </location>
</feature>
<feature type="transmembrane region" description="Helical" evidence="1">
    <location>
        <begin position="269"/>
        <end position="291"/>
    </location>
</feature>
<feature type="transmembrane region" description="Helical" evidence="1">
    <location>
        <begin position="350"/>
        <end position="369"/>
    </location>
</feature>
<feature type="transmembrane region" description="Helical" evidence="1">
    <location>
        <begin position="389"/>
        <end position="411"/>
    </location>
</feature>
<feature type="transmembrane region" description="Helical" evidence="1">
    <location>
        <begin position="426"/>
        <end position="443"/>
    </location>
</feature>
<feature type="transmembrane region" description="Helical" evidence="1">
    <location>
        <begin position="456"/>
        <end position="478"/>
    </location>
</feature>
<comment type="subcellular location">
    <subcellularLocation>
        <location evidence="2">Cell membrane</location>
        <topology evidence="2">Multi-pass membrane protein</topology>
    </subcellularLocation>
</comment>
<comment type="similarity">
    <text evidence="2">Belongs to the UPF0324 family.</text>
</comment>
<keyword id="KW-1003">Cell membrane</keyword>
<keyword id="KW-0472">Membrane</keyword>
<keyword id="KW-1185">Reference proteome</keyword>
<keyword id="KW-0812">Transmembrane</keyword>
<keyword id="KW-1133">Transmembrane helix</keyword>
<organism>
    <name type="scientific">Nitrosomonas europaea (strain ATCC 19718 / CIP 103999 / KCTC 2705 / NBRC 14298)</name>
    <dbReference type="NCBI Taxonomy" id="228410"/>
    <lineage>
        <taxon>Bacteria</taxon>
        <taxon>Pseudomonadati</taxon>
        <taxon>Pseudomonadota</taxon>
        <taxon>Betaproteobacteria</taxon>
        <taxon>Nitrosomonadales</taxon>
        <taxon>Nitrosomonadaceae</taxon>
        <taxon>Nitrosomonas</taxon>
    </lineage>
</organism>
<protein>
    <recommendedName>
        <fullName>UPF0324 membrane protein NE0724</fullName>
    </recommendedName>
</protein>
<accession>Q82WF6</accession>
<proteinExistence type="inferred from homology"/>